<organism>
    <name type="scientific">Escherichia coli O45:K1 (strain S88 / ExPEC)</name>
    <dbReference type="NCBI Taxonomy" id="585035"/>
    <lineage>
        <taxon>Bacteria</taxon>
        <taxon>Pseudomonadati</taxon>
        <taxon>Pseudomonadota</taxon>
        <taxon>Gammaproteobacteria</taxon>
        <taxon>Enterobacterales</taxon>
        <taxon>Enterobacteriaceae</taxon>
        <taxon>Escherichia</taxon>
    </lineage>
</organism>
<sequence>MESLASLYKNHIATLQERTRDALARFKLDALLIHSGELFNVFLDDHPYPFKVNPQFKAWVPVTQVPNCWLLVDGVNKPKLWFYLPVDYWHNVEPLPNSFWTEDVEVIALPKADGIGSLLPAARGNIGYIGPVPERALQLGIEASNINPKGVIDYLHYYRSFKTEYELACMREAQKMAVNGHRAAEEAFRSGMSEFDINIAYLTATGHRDTDVPYSNIVALNEHAAVLHYTKLDHQAPEEMRSFLLDAGAEYNGYAADLTRTWSAKSDNDYAQLVKDVNDEQLALIATMKAGVSYVDYHIQFHQRIAKLLRKHQIITDMSEEAMVENDLTGPFMPHGIGHPLGLQVHDVAGFMQDDSGTHLAAPAKYPYLRCTRILQPGMVLTIEPGIYFIESLLAPWREGQFSKHFNWQKIEALKPFGGIRIEDNVVIHENNVENMTRDLKLA</sequence>
<name>PEPQ_ECO45</name>
<keyword id="KW-0224">Dipeptidase</keyword>
<keyword id="KW-0378">Hydrolase</keyword>
<keyword id="KW-0464">Manganese</keyword>
<keyword id="KW-0479">Metal-binding</keyword>
<keyword id="KW-0482">Metalloprotease</keyword>
<keyword id="KW-0645">Protease</keyword>
<keyword id="KW-1185">Reference proteome</keyword>
<evidence type="ECO:0000255" key="1">
    <source>
        <dbReference type="HAMAP-Rule" id="MF_01279"/>
    </source>
</evidence>
<feature type="chain" id="PRO_1000140311" description="Xaa-Pro dipeptidase">
    <location>
        <begin position="1"/>
        <end position="443"/>
    </location>
</feature>
<feature type="binding site" evidence="1">
    <location>
        <position position="246"/>
    </location>
    <ligand>
        <name>Mn(2+)</name>
        <dbReference type="ChEBI" id="CHEBI:29035"/>
        <label>2</label>
    </ligand>
</feature>
<feature type="binding site" evidence="1">
    <location>
        <position position="257"/>
    </location>
    <ligand>
        <name>Mn(2+)</name>
        <dbReference type="ChEBI" id="CHEBI:29035"/>
        <label>1</label>
    </ligand>
</feature>
<feature type="binding site" evidence="1">
    <location>
        <position position="257"/>
    </location>
    <ligand>
        <name>Mn(2+)</name>
        <dbReference type="ChEBI" id="CHEBI:29035"/>
        <label>2</label>
    </ligand>
</feature>
<feature type="binding site" evidence="1">
    <location>
        <position position="339"/>
    </location>
    <ligand>
        <name>Mn(2+)</name>
        <dbReference type="ChEBI" id="CHEBI:29035"/>
        <label>1</label>
    </ligand>
</feature>
<feature type="binding site" evidence="1">
    <location>
        <position position="384"/>
    </location>
    <ligand>
        <name>Mn(2+)</name>
        <dbReference type="ChEBI" id="CHEBI:29035"/>
        <label>1</label>
    </ligand>
</feature>
<feature type="binding site" evidence="1">
    <location>
        <position position="423"/>
    </location>
    <ligand>
        <name>Mn(2+)</name>
        <dbReference type="ChEBI" id="CHEBI:29035"/>
        <label>1</label>
    </ligand>
</feature>
<feature type="binding site" evidence="1">
    <location>
        <position position="423"/>
    </location>
    <ligand>
        <name>Mn(2+)</name>
        <dbReference type="ChEBI" id="CHEBI:29035"/>
        <label>2</label>
    </ligand>
</feature>
<accession>B7MHD2</accession>
<reference key="1">
    <citation type="journal article" date="2009" name="PLoS Genet.">
        <title>Organised genome dynamics in the Escherichia coli species results in highly diverse adaptive paths.</title>
        <authorList>
            <person name="Touchon M."/>
            <person name="Hoede C."/>
            <person name="Tenaillon O."/>
            <person name="Barbe V."/>
            <person name="Baeriswyl S."/>
            <person name="Bidet P."/>
            <person name="Bingen E."/>
            <person name="Bonacorsi S."/>
            <person name="Bouchier C."/>
            <person name="Bouvet O."/>
            <person name="Calteau A."/>
            <person name="Chiapello H."/>
            <person name="Clermont O."/>
            <person name="Cruveiller S."/>
            <person name="Danchin A."/>
            <person name="Diard M."/>
            <person name="Dossat C."/>
            <person name="Karoui M.E."/>
            <person name="Frapy E."/>
            <person name="Garry L."/>
            <person name="Ghigo J.M."/>
            <person name="Gilles A.M."/>
            <person name="Johnson J."/>
            <person name="Le Bouguenec C."/>
            <person name="Lescat M."/>
            <person name="Mangenot S."/>
            <person name="Martinez-Jehanne V."/>
            <person name="Matic I."/>
            <person name="Nassif X."/>
            <person name="Oztas S."/>
            <person name="Petit M.A."/>
            <person name="Pichon C."/>
            <person name="Rouy Z."/>
            <person name="Ruf C.S."/>
            <person name="Schneider D."/>
            <person name="Tourret J."/>
            <person name="Vacherie B."/>
            <person name="Vallenet D."/>
            <person name="Medigue C."/>
            <person name="Rocha E.P.C."/>
            <person name="Denamur E."/>
        </authorList>
    </citation>
    <scope>NUCLEOTIDE SEQUENCE [LARGE SCALE GENOMIC DNA]</scope>
    <source>
        <strain>S88 / ExPEC</strain>
    </source>
</reference>
<protein>
    <recommendedName>
        <fullName evidence="1">Xaa-Pro dipeptidase</fullName>
        <shortName evidence="1">X-Pro dipeptidase</shortName>
        <ecNumber evidence="1">3.4.13.9</ecNumber>
    </recommendedName>
    <alternativeName>
        <fullName evidence="1">Imidodipeptidase</fullName>
    </alternativeName>
    <alternativeName>
        <fullName evidence="1">Proline dipeptidase</fullName>
        <shortName evidence="1">Prolidase</shortName>
    </alternativeName>
</protein>
<gene>
    <name evidence="1" type="primary">pepQ</name>
    <name type="ordered locus">ECS88_4295</name>
</gene>
<proteinExistence type="inferred from homology"/>
<dbReference type="EC" id="3.4.13.9" evidence="1"/>
<dbReference type="EMBL" id="CU928161">
    <property type="protein sequence ID" value="CAR05486.1"/>
    <property type="molecule type" value="Genomic_DNA"/>
</dbReference>
<dbReference type="RefSeq" id="WP_000444545.1">
    <property type="nucleotide sequence ID" value="NC_011742.1"/>
</dbReference>
<dbReference type="SMR" id="B7MHD2"/>
<dbReference type="MEROPS" id="M24.003"/>
<dbReference type="KEGG" id="ecz:ECS88_4295"/>
<dbReference type="HOGENOM" id="CLU_050675_0_0_6"/>
<dbReference type="Proteomes" id="UP000000747">
    <property type="component" value="Chromosome"/>
</dbReference>
<dbReference type="GO" id="GO:0005829">
    <property type="term" value="C:cytosol"/>
    <property type="evidence" value="ECO:0007669"/>
    <property type="project" value="TreeGrafter"/>
</dbReference>
<dbReference type="GO" id="GO:0004177">
    <property type="term" value="F:aminopeptidase activity"/>
    <property type="evidence" value="ECO:0007669"/>
    <property type="project" value="TreeGrafter"/>
</dbReference>
<dbReference type="GO" id="GO:0046872">
    <property type="term" value="F:metal ion binding"/>
    <property type="evidence" value="ECO:0007669"/>
    <property type="project" value="UniProtKB-KW"/>
</dbReference>
<dbReference type="GO" id="GO:0008235">
    <property type="term" value="F:metalloexopeptidase activity"/>
    <property type="evidence" value="ECO:0007669"/>
    <property type="project" value="UniProtKB-UniRule"/>
</dbReference>
<dbReference type="GO" id="GO:0016795">
    <property type="term" value="F:phosphoric triester hydrolase activity"/>
    <property type="evidence" value="ECO:0007669"/>
    <property type="project" value="InterPro"/>
</dbReference>
<dbReference type="GO" id="GO:0102009">
    <property type="term" value="F:proline dipeptidase activity"/>
    <property type="evidence" value="ECO:0007669"/>
    <property type="project" value="UniProtKB-EC"/>
</dbReference>
<dbReference type="GO" id="GO:0006508">
    <property type="term" value="P:proteolysis"/>
    <property type="evidence" value="ECO:0007669"/>
    <property type="project" value="UniProtKB-KW"/>
</dbReference>
<dbReference type="CDD" id="cd01087">
    <property type="entry name" value="Prolidase"/>
    <property type="match status" value="1"/>
</dbReference>
<dbReference type="FunFam" id="3.40.350.10:FF:000002">
    <property type="entry name" value="Xaa-Pro dipeptidase"/>
    <property type="match status" value="1"/>
</dbReference>
<dbReference type="FunFam" id="3.90.230.10:FF:000006">
    <property type="entry name" value="Xaa-Pro dipeptidase"/>
    <property type="match status" value="1"/>
</dbReference>
<dbReference type="Gene3D" id="3.90.230.10">
    <property type="entry name" value="Creatinase/methionine aminopeptidase superfamily"/>
    <property type="match status" value="1"/>
</dbReference>
<dbReference type="Gene3D" id="3.40.350.10">
    <property type="entry name" value="Creatinase/prolidase N-terminal domain"/>
    <property type="match status" value="1"/>
</dbReference>
<dbReference type="HAMAP" id="MF_01279">
    <property type="entry name" value="X_Pro_dipeptid"/>
    <property type="match status" value="1"/>
</dbReference>
<dbReference type="InterPro" id="IPR029149">
    <property type="entry name" value="Creatin/AminoP/Spt16_N"/>
</dbReference>
<dbReference type="InterPro" id="IPR036005">
    <property type="entry name" value="Creatinase/aminopeptidase-like"/>
</dbReference>
<dbReference type="InterPro" id="IPR048819">
    <property type="entry name" value="PepQ_N"/>
</dbReference>
<dbReference type="InterPro" id="IPR000994">
    <property type="entry name" value="Pept_M24"/>
</dbReference>
<dbReference type="InterPro" id="IPR001131">
    <property type="entry name" value="Peptidase_M24B_aminopep-P_CS"/>
</dbReference>
<dbReference type="InterPro" id="IPR052433">
    <property type="entry name" value="X-Pro_dipept-like"/>
</dbReference>
<dbReference type="InterPro" id="IPR022846">
    <property type="entry name" value="X_Pro_dipept"/>
</dbReference>
<dbReference type="NCBIfam" id="NF010133">
    <property type="entry name" value="PRK13607.1"/>
    <property type="match status" value="1"/>
</dbReference>
<dbReference type="PANTHER" id="PTHR43226">
    <property type="entry name" value="XAA-PRO AMINOPEPTIDASE 3"/>
    <property type="match status" value="1"/>
</dbReference>
<dbReference type="PANTHER" id="PTHR43226:SF8">
    <property type="entry name" value="XAA-PRO DIPEPTIDASE"/>
    <property type="match status" value="1"/>
</dbReference>
<dbReference type="Pfam" id="PF21216">
    <property type="entry name" value="PepQ_N"/>
    <property type="match status" value="1"/>
</dbReference>
<dbReference type="Pfam" id="PF00557">
    <property type="entry name" value="Peptidase_M24"/>
    <property type="match status" value="1"/>
</dbReference>
<dbReference type="SUPFAM" id="SSF55920">
    <property type="entry name" value="Creatinase/aminopeptidase"/>
    <property type="match status" value="1"/>
</dbReference>
<dbReference type="PROSITE" id="PS00491">
    <property type="entry name" value="PROLINE_PEPTIDASE"/>
    <property type="match status" value="1"/>
</dbReference>
<comment type="function">
    <text evidence="1">Splits dipeptides with a prolyl residue in the C-terminal position.</text>
</comment>
<comment type="catalytic activity">
    <reaction evidence="1">
        <text>Xaa-L-Pro dipeptide + H2O = an L-alpha-amino acid + L-proline</text>
        <dbReference type="Rhea" id="RHEA:76407"/>
        <dbReference type="ChEBI" id="CHEBI:15377"/>
        <dbReference type="ChEBI" id="CHEBI:59869"/>
        <dbReference type="ChEBI" id="CHEBI:60039"/>
        <dbReference type="ChEBI" id="CHEBI:195196"/>
        <dbReference type="EC" id="3.4.13.9"/>
    </reaction>
</comment>
<comment type="cofactor">
    <cofactor evidence="1">
        <name>Mn(2+)</name>
        <dbReference type="ChEBI" id="CHEBI:29035"/>
    </cofactor>
    <text evidence="1">Binds 2 manganese ions per subunit.</text>
</comment>
<comment type="similarity">
    <text evidence="1">Belongs to the peptidase M24B family. Bacterial-type prolidase subfamily.</text>
</comment>